<accession>A8ADR1</accession>
<gene>
    <name evidence="1" type="primary">truA</name>
    <name type="ordered locus">CKO_00468</name>
</gene>
<proteinExistence type="inferred from homology"/>
<reference key="1">
    <citation type="submission" date="2007-08" db="EMBL/GenBank/DDBJ databases">
        <authorList>
            <consortium name="The Citrobacter koseri Genome Sequencing Project"/>
            <person name="McClelland M."/>
            <person name="Sanderson E.K."/>
            <person name="Porwollik S."/>
            <person name="Spieth J."/>
            <person name="Clifton W.S."/>
            <person name="Latreille P."/>
            <person name="Courtney L."/>
            <person name="Wang C."/>
            <person name="Pepin K."/>
            <person name="Bhonagiri V."/>
            <person name="Nash W."/>
            <person name="Johnson M."/>
            <person name="Thiruvilangam P."/>
            <person name="Wilson R."/>
        </authorList>
    </citation>
    <scope>NUCLEOTIDE SEQUENCE [LARGE SCALE GENOMIC DNA]</scope>
    <source>
        <strain>ATCC BAA-895 / CDC 4225-83 / SGSC4696</strain>
    </source>
</reference>
<keyword id="KW-0413">Isomerase</keyword>
<keyword id="KW-1185">Reference proteome</keyword>
<keyword id="KW-0819">tRNA processing</keyword>
<protein>
    <recommendedName>
        <fullName evidence="1">tRNA pseudouridine synthase A</fullName>
        <ecNumber evidence="1">5.4.99.12</ecNumber>
    </recommendedName>
    <alternativeName>
        <fullName evidence="1">tRNA pseudouridine(38-40) synthase</fullName>
    </alternativeName>
    <alternativeName>
        <fullName evidence="1">tRNA pseudouridylate synthase I</fullName>
    </alternativeName>
    <alternativeName>
        <fullName evidence="1">tRNA-uridine isomerase I</fullName>
    </alternativeName>
</protein>
<dbReference type="EC" id="5.4.99.12" evidence="1"/>
<dbReference type="EMBL" id="CP000822">
    <property type="protein sequence ID" value="ABV11624.1"/>
    <property type="molecule type" value="Genomic_DNA"/>
</dbReference>
<dbReference type="RefSeq" id="WP_012131451.1">
    <property type="nucleotide sequence ID" value="NC_009792.1"/>
</dbReference>
<dbReference type="SMR" id="A8ADR1"/>
<dbReference type="STRING" id="290338.CKO_00468"/>
<dbReference type="GeneID" id="45134715"/>
<dbReference type="KEGG" id="cko:CKO_00468"/>
<dbReference type="HOGENOM" id="CLU_014673_0_2_6"/>
<dbReference type="OrthoDB" id="9811823at2"/>
<dbReference type="Proteomes" id="UP000008148">
    <property type="component" value="Chromosome"/>
</dbReference>
<dbReference type="GO" id="GO:0003723">
    <property type="term" value="F:RNA binding"/>
    <property type="evidence" value="ECO:0007669"/>
    <property type="project" value="InterPro"/>
</dbReference>
<dbReference type="GO" id="GO:0160147">
    <property type="term" value="F:tRNA pseudouridine(38-40) synthase activity"/>
    <property type="evidence" value="ECO:0007669"/>
    <property type="project" value="UniProtKB-EC"/>
</dbReference>
<dbReference type="GO" id="GO:0031119">
    <property type="term" value="P:tRNA pseudouridine synthesis"/>
    <property type="evidence" value="ECO:0007669"/>
    <property type="project" value="UniProtKB-UniRule"/>
</dbReference>
<dbReference type="CDD" id="cd02570">
    <property type="entry name" value="PseudoU_synth_EcTruA"/>
    <property type="match status" value="1"/>
</dbReference>
<dbReference type="FunFam" id="3.30.70.580:FF:000001">
    <property type="entry name" value="tRNA pseudouridine synthase A"/>
    <property type="match status" value="1"/>
</dbReference>
<dbReference type="FunFam" id="3.30.70.660:FF:000001">
    <property type="entry name" value="tRNA pseudouridine synthase A"/>
    <property type="match status" value="1"/>
</dbReference>
<dbReference type="Gene3D" id="3.30.70.660">
    <property type="entry name" value="Pseudouridine synthase I, catalytic domain, C-terminal subdomain"/>
    <property type="match status" value="1"/>
</dbReference>
<dbReference type="Gene3D" id="3.30.70.580">
    <property type="entry name" value="Pseudouridine synthase I, catalytic domain, N-terminal subdomain"/>
    <property type="match status" value="1"/>
</dbReference>
<dbReference type="HAMAP" id="MF_00171">
    <property type="entry name" value="TruA"/>
    <property type="match status" value="1"/>
</dbReference>
<dbReference type="InterPro" id="IPR020103">
    <property type="entry name" value="PsdUridine_synth_cat_dom_sf"/>
</dbReference>
<dbReference type="InterPro" id="IPR001406">
    <property type="entry name" value="PsdUridine_synth_TruA"/>
</dbReference>
<dbReference type="InterPro" id="IPR020097">
    <property type="entry name" value="PsdUridine_synth_TruA_a/b_dom"/>
</dbReference>
<dbReference type="InterPro" id="IPR020095">
    <property type="entry name" value="PsdUridine_synth_TruA_C"/>
</dbReference>
<dbReference type="InterPro" id="IPR020094">
    <property type="entry name" value="TruA/RsuA/RluB/E/F_N"/>
</dbReference>
<dbReference type="NCBIfam" id="TIGR00071">
    <property type="entry name" value="hisT_truA"/>
    <property type="match status" value="1"/>
</dbReference>
<dbReference type="PANTHER" id="PTHR11142">
    <property type="entry name" value="PSEUDOURIDYLATE SYNTHASE"/>
    <property type="match status" value="1"/>
</dbReference>
<dbReference type="PANTHER" id="PTHR11142:SF0">
    <property type="entry name" value="TRNA PSEUDOURIDINE SYNTHASE-LIKE 1"/>
    <property type="match status" value="1"/>
</dbReference>
<dbReference type="Pfam" id="PF01416">
    <property type="entry name" value="PseudoU_synth_1"/>
    <property type="match status" value="2"/>
</dbReference>
<dbReference type="PIRSF" id="PIRSF001430">
    <property type="entry name" value="tRNA_psdUrid_synth"/>
    <property type="match status" value="1"/>
</dbReference>
<dbReference type="SUPFAM" id="SSF55120">
    <property type="entry name" value="Pseudouridine synthase"/>
    <property type="match status" value="1"/>
</dbReference>
<evidence type="ECO:0000255" key="1">
    <source>
        <dbReference type="HAMAP-Rule" id="MF_00171"/>
    </source>
</evidence>
<organism>
    <name type="scientific">Citrobacter koseri (strain ATCC BAA-895 / CDC 4225-83 / SGSC4696)</name>
    <dbReference type="NCBI Taxonomy" id="290338"/>
    <lineage>
        <taxon>Bacteria</taxon>
        <taxon>Pseudomonadati</taxon>
        <taxon>Pseudomonadota</taxon>
        <taxon>Gammaproteobacteria</taxon>
        <taxon>Enterobacterales</taxon>
        <taxon>Enterobacteriaceae</taxon>
        <taxon>Citrobacter</taxon>
    </lineage>
</organism>
<sequence length="270" mass="30333">MSAVEQPPVYKIALGIEYDGSKYYGWQRQNEVRSVQEKLEKALSQVANEPVNVFCAGRTDAGVHGTGQVVHFETTALRKDAAWTLGVNANLPGDIAVRWVKAVPEDFHARFSATARRYRYIIYNHRLRPAILGHGVTHFYEPLDAERMHRAAQCLIGENDFTSFRAVQCQSRTPWRNVMHINVTRHGAYVVVDIKANAFVHHMVRNIVGSLMEVGAHNQPESWIAELLAAKDRRLSAATAKAEGLYLVAVDYPERFDLPKTPLGPLFLAD</sequence>
<comment type="function">
    <text evidence="1">Formation of pseudouridine at positions 38, 39 and 40 in the anticodon stem and loop of transfer RNAs.</text>
</comment>
<comment type="catalytic activity">
    <reaction evidence="1">
        <text>uridine(38/39/40) in tRNA = pseudouridine(38/39/40) in tRNA</text>
        <dbReference type="Rhea" id="RHEA:22376"/>
        <dbReference type="Rhea" id="RHEA-COMP:10085"/>
        <dbReference type="Rhea" id="RHEA-COMP:10087"/>
        <dbReference type="ChEBI" id="CHEBI:65314"/>
        <dbReference type="ChEBI" id="CHEBI:65315"/>
        <dbReference type="EC" id="5.4.99.12"/>
    </reaction>
</comment>
<comment type="subunit">
    <text evidence="1">Homodimer.</text>
</comment>
<comment type="similarity">
    <text evidence="1">Belongs to the tRNA pseudouridine synthase TruA family.</text>
</comment>
<feature type="chain" id="PRO_1000017070" description="tRNA pseudouridine synthase A">
    <location>
        <begin position="1"/>
        <end position="270"/>
    </location>
</feature>
<feature type="region of interest" description="RNA binding" evidence="1">
    <location>
        <begin position="107"/>
        <end position="111"/>
    </location>
</feature>
<feature type="region of interest" description="Interaction with tRNA" evidence="1">
    <location>
        <begin position="168"/>
        <end position="172"/>
    </location>
</feature>
<feature type="active site" description="Nucleophile" evidence="1">
    <location>
        <position position="60"/>
    </location>
</feature>
<feature type="binding site" evidence="1">
    <location>
        <position position="118"/>
    </location>
    <ligand>
        <name>substrate</name>
    </ligand>
</feature>
<feature type="site" description="Interaction with tRNA; Important for base-flipping" evidence="1">
    <location>
        <position position="58"/>
    </location>
</feature>
<feature type="site" description="Interaction with tRNA" evidence="1">
    <location>
        <position position="78"/>
    </location>
</feature>
<feature type="site" description="Interaction with tRNA" evidence="1">
    <location>
        <position position="110"/>
    </location>
</feature>
<feature type="site" description="Interaction with tRNA" evidence="1">
    <location>
        <position position="126"/>
    </location>
</feature>
<feature type="site" description="Interaction with tRNA" evidence="1">
    <location>
        <position position="139"/>
    </location>
</feature>
<name>TRUA_CITK8</name>